<keyword id="KW-0249">Electron transport</keyword>
<keyword id="KW-0472">Membrane</keyword>
<keyword id="KW-0496">Mitochondrion</keyword>
<keyword id="KW-0999">Mitochondrion inner membrane</keyword>
<keyword id="KW-0520">NAD</keyword>
<keyword id="KW-0679">Respiratory chain</keyword>
<keyword id="KW-1278">Translocase</keyword>
<keyword id="KW-0812">Transmembrane</keyword>
<keyword id="KW-1133">Transmembrane helix</keyword>
<keyword id="KW-0813">Transport</keyword>
<keyword id="KW-0830">Ubiquinone</keyword>
<feature type="chain" id="PRO_0000275093" description="NADH-ubiquinone oxidoreductase chain 4L">
    <location>
        <begin position="1"/>
        <end position="98"/>
    </location>
</feature>
<feature type="transmembrane region" description="Helical" evidence="3">
    <location>
        <begin position="1"/>
        <end position="21"/>
    </location>
</feature>
<feature type="transmembrane region" description="Helical" evidence="3">
    <location>
        <begin position="30"/>
        <end position="50"/>
    </location>
</feature>
<feature type="transmembrane region" description="Helical" evidence="3">
    <location>
        <begin position="61"/>
        <end position="81"/>
    </location>
</feature>
<dbReference type="EC" id="7.1.1.2"/>
<dbReference type="EMBL" id="AY377237">
    <property type="protein sequence ID" value="AAQ93776.1"/>
    <property type="molecule type" value="Genomic_DNA"/>
</dbReference>
<dbReference type="EMBL" id="AM181030">
    <property type="protein sequence ID" value="CAJ57061.1"/>
    <property type="molecule type" value="Genomic_DNA"/>
</dbReference>
<dbReference type="RefSeq" id="YP_778872.1">
    <property type="nucleotide sequence ID" value="NC_008429.1"/>
</dbReference>
<dbReference type="SMR" id="Q679A7"/>
<dbReference type="GeneID" id="4356251"/>
<dbReference type="CTD" id="4539"/>
<dbReference type="GO" id="GO:0005743">
    <property type="term" value="C:mitochondrial inner membrane"/>
    <property type="evidence" value="ECO:0000250"/>
    <property type="project" value="UniProtKB"/>
</dbReference>
<dbReference type="GO" id="GO:0045271">
    <property type="term" value="C:respiratory chain complex I"/>
    <property type="evidence" value="ECO:0000250"/>
    <property type="project" value="UniProtKB"/>
</dbReference>
<dbReference type="GO" id="GO:0008137">
    <property type="term" value="F:NADH dehydrogenase (ubiquinone) activity"/>
    <property type="evidence" value="ECO:0000250"/>
    <property type="project" value="UniProtKB"/>
</dbReference>
<dbReference type="GO" id="GO:0042773">
    <property type="term" value="P:ATP synthesis coupled electron transport"/>
    <property type="evidence" value="ECO:0007669"/>
    <property type="project" value="InterPro"/>
</dbReference>
<dbReference type="FunFam" id="1.10.287.3510:FF:000002">
    <property type="entry name" value="NADH-ubiquinone oxidoreductase chain 4L"/>
    <property type="match status" value="1"/>
</dbReference>
<dbReference type="Gene3D" id="1.10.287.3510">
    <property type="match status" value="1"/>
</dbReference>
<dbReference type="InterPro" id="IPR001133">
    <property type="entry name" value="NADH_UbQ_OxRdtase_chain4L/K"/>
</dbReference>
<dbReference type="InterPro" id="IPR039428">
    <property type="entry name" value="NUOK/Mnh_C1-like"/>
</dbReference>
<dbReference type="PANTHER" id="PTHR11434:SF0">
    <property type="entry name" value="NADH-UBIQUINONE OXIDOREDUCTASE CHAIN 4L"/>
    <property type="match status" value="1"/>
</dbReference>
<dbReference type="PANTHER" id="PTHR11434">
    <property type="entry name" value="NADH-UBIQUINONE OXIDOREDUCTASE SUBUNIT ND4L"/>
    <property type="match status" value="1"/>
</dbReference>
<dbReference type="Pfam" id="PF00420">
    <property type="entry name" value="Oxidored_q2"/>
    <property type="match status" value="1"/>
</dbReference>
<reference key="1">
    <citation type="journal article" date="2004" name="Mol. Phylogenet. Evol.">
        <title>A phylogeny of the extant Phocidae inferred from complete mitochondrial DNA coding regions.</title>
        <authorList>
            <person name="Davis C.S."/>
            <person name="Delisle I."/>
            <person name="Stirling I."/>
            <person name="Siniff D.B."/>
            <person name="Strobeck C."/>
        </authorList>
    </citation>
    <scope>NUCLEOTIDE SEQUENCE [GENOMIC DNA]</scope>
</reference>
<reference key="2">
    <citation type="journal article" date="2006" name="Mol. Phylogenet. Evol.">
        <title>Pinniped phylogeny and a new hypothesis for their origin and dispersal.</title>
        <authorList>
            <person name="Arnason U."/>
            <person name="Gullberg A."/>
            <person name="Janke A."/>
            <person name="Kullberg M."/>
            <person name="Lehman N."/>
            <person name="Petrov E.A."/>
            <person name="Vainola R."/>
        </authorList>
    </citation>
    <scope>NUCLEOTIDE SEQUENCE [GENOMIC DNA]</scope>
</reference>
<gene>
    <name type="primary">MT-ND4L</name>
    <name type="synonym">MTND4L</name>
    <name type="synonym">NADH4L</name>
    <name type="synonym">ND4L</name>
</gene>
<organism>
    <name type="scientific">Pagophilus groenlandicus</name>
    <name type="common">Harp seal</name>
    <name type="synonym">Phoca groenlandica</name>
    <dbReference type="NCBI Taxonomy" id="39089"/>
    <lineage>
        <taxon>Eukaryota</taxon>
        <taxon>Metazoa</taxon>
        <taxon>Chordata</taxon>
        <taxon>Craniata</taxon>
        <taxon>Vertebrata</taxon>
        <taxon>Euteleostomi</taxon>
        <taxon>Mammalia</taxon>
        <taxon>Eutheria</taxon>
        <taxon>Laurasiatheria</taxon>
        <taxon>Carnivora</taxon>
        <taxon>Caniformia</taxon>
        <taxon>Pinnipedia</taxon>
        <taxon>Phocidae</taxon>
        <taxon>Phocinae</taxon>
        <taxon>Phoca</taxon>
    </lineage>
</organism>
<evidence type="ECO:0000250" key="1">
    <source>
        <dbReference type="UniProtKB" id="P03901"/>
    </source>
</evidence>
<evidence type="ECO:0000250" key="2">
    <source>
        <dbReference type="UniProtKB" id="P03902"/>
    </source>
</evidence>
<evidence type="ECO:0000255" key="3"/>
<evidence type="ECO:0000305" key="4"/>
<geneLocation type="mitochondrion"/>
<accession>Q679A7</accession>
<name>NU4LM_PAGGO</name>
<protein>
    <recommendedName>
        <fullName>NADH-ubiquinone oxidoreductase chain 4L</fullName>
        <ecNumber>7.1.1.2</ecNumber>
    </recommendedName>
    <alternativeName>
        <fullName>NADH dehydrogenase subunit 4L</fullName>
    </alternativeName>
</protein>
<proteinExistence type="inferred from homology"/>
<sequence>MSMVYANIFLAFIMSLMGLLVYRSHLMSSLLCLEGMMLSLFVMMTVTILINHFTLASMAPIILLVFAACEAALGLSLLVMVSNTYGTDYVQNLNLLQC</sequence>
<comment type="function">
    <text evidence="1">Core subunit of the mitochondrial membrane respiratory chain NADH dehydrogenase (Complex I) which catalyzes electron transfer from NADH through the respiratory chain, using ubiquinone as an electron acceptor. Part of the enzyme membrane arm which is embedded in the lipid bilayer and involved in proton translocation.</text>
</comment>
<comment type="catalytic activity">
    <reaction evidence="1">
        <text>a ubiquinone + NADH + 5 H(+)(in) = a ubiquinol + NAD(+) + 4 H(+)(out)</text>
        <dbReference type="Rhea" id="RHEA:29091"/>
        <dbReference type="Rhea" id="RHEA-COMP:9565"/>
        <dbReference type="Rhea" id="RHEA-COMP:9566"/>
        <dbReference type="ChEBI" id="CHEBI:15378"/>
        <dbReference type="ChEBI" id="CHEBI:16389"/>
        <dbReference type="ChEBI" id="CHEBI:17976"/>
        <dbReference type="ChEBI" id="CHEBI:57540"/>
        <dbReference type="ChEBI" id="CHEBI:57945"/>
        <dbReference type="EC" id="7.1.1.2"/>
    </reaction>
    <physiologicalReaction direction="left-to-right" evidence="1">
        <dbReference type="Rhea" id="RHEA:29092"/>
    </physiologicalReaction>
</comment>
<comment type="subunit">
    <text evidence="2">Core subunit of respiratory chain NADH dehydrogenase (Complex I) which is composed of 45 different subunits.</text>
</comment>
<comment type="subcellular location">
    <subcellularLocation>
        <location evidence="2">Mitochondrion inner membrane</location>
        <topology evidence="3">Multi-pass membrane protein</topology>
    </subcellularLocation>
</comment>
<comment type="similarity">
    <text evidence="4">Belongs to the complex I subunit 4L family.</text>
</comment>